<protein>
    <recommendedName>
        <fullName evidence="1">Bis(5'-nucleosyl)-tetraphosphatase, symmetrical</fullName>
        <ecNumber evidence="1">3.6.1.41</ecNumber>
    </recommendedName>
    <alternativeName>
        <fullName evidence="1">Ap4A hydrolase</fullName>
    </alternativeName>
    <alternativeName>
        <fullName evidence="1">Diadenosine 5',5'''-P1,P4-tetraphosphate pyrophosphohydrolase</fullName>
    </alternativeName>
    <alternativeName>
        <fullName evidence="1">Diadenosine tetraphosphatase</fullName>
    </alternativeName>
</protein>
<proteinExistence type="inferred from homology"/>
<organism>
    <name type="scientific">Vibrio vulnificus (strain CMCP6)</name>
    <dbReference type="NCBI Taxonomy" id="216895"/>
    <lineage>
        <taxon>Bacteria</taxon>
        <taxon>Pseudomonadati</taxon>
        <taxon>Pseudomonadota</taxon>
        <taxon>Gammaproteobacteria</taxon>
        <taxon>Vibrionales</taxon>
        <taxon>Vibrionaceae</taxon>
        <taxon>Vibrio</taxon>
    </lineage>
</organism>
<sequence length="269" mass="30780">MANYIVGDIQGCFDELMLLLAQCQFDKNQDTLWVAGDLVARGPKSLETLRFIKSLGNSAKVVLGNHDLHLMAVSLGIRNNKAKDKTAPIFASEDGNELLHWLRQQPLLAEHPEFVVCHAGISPQWDLATARLCAEEVESLLRSENYRWLIENMYCNQPDLWQDNLSGLDRYRYIINAFTRMRFCFADGRLDMDCKLPPSEVKESELMPWFTLPQRRALDKPVLFGHWAALEGYISEEVIGLDTGCVWNGSLTMIRWEDKQVFSQKALEN</sequence>
<name>APAH_VIBVU</name>
<feature type="chain" id="PRO_0000198014" description="Bis(5'-nucleosyl)-tetraphosphatase, symmetrical">
    <location>
        <begin position="1"/>
        <end position="269"/>
    </location>
</feature>
<accession>Q8DED0</accession>
<reference key="1">
    <citation type="submission" date="2002-12" db="EMBL/GenBank/DDBJ databases">
        <title>Complete genome sequence of Vibrio vulnificus CMCP6.</title>
        <authorList>
            <person name="Rhee J.H."/>
            <person name="Kim S.Y."/>
            <person name="Chung S.S."/>
            <person name="Kim J.J."/>
            <person name="Moon Y.H."/>
            <person name="Jeong H."/>
            <person name="Choy H.E."/>
        </authorList>
    </citation>
    <scope>NUCLEOTIDE SEQUENCE [LARGE SCALE GENOMIC DNA]</scope>
    <source>
        <strain>CMCP6</strain>
    </source>
</reference>
<dbReference type="EC" id="3.6.1.41" evidence="1"/>
<dbReference type="EMBL" id="AE016795">
    <property type="protein sequence ID" value="AAO09177.1"/>
    <property type="molecule type" value="Genomic_DNA"/>
</dbReference>
<dbReference type="RefSeq" id="WP_011078744.1">
    <property type="nucleotide sequence ID" value="NC_004459.3"/>
</dbReference>
<dbReference type="SMR" id="Q8DED0"/>
<dbReference type="KEGG" id="vvu:VV1_0665"/>
<dbReference type="HOGENOM" id="CLU_056184_2_0_6"/>
<dbReference type="Proteomes" id="UP000002275">
    <property type="component" value="Chromosome 1"/>
</dbReference>
<dbReference type="GO" id="GO:0008803">
    <property type="term" value="F:bis(5'-nucleosyl)-tetraphosphatase (symmetrical) activity"/>
    <property type="evidence" value="ECO:0007669"/>
    <property type="project" value="UniProtKB-UniRule"/>
</dbReference>
<dbReference type="CDD" id="cd07422">
    <property type="entry name" value="MPP_ApaH"/>
    <property type="match status" value="1"/>
</dbReference>
<dbReference type="Gene3D" id="3.60.21.10">
    <property type="match status" value="1"/>
</dbReference>
<dbReference type="HAMAP" id="MF_00199">
    <property type="entry name" value="ApaH"/>
    <property type="match status" value="1"/>
</dbReference>
<dbReference type="InterPro" id="IPR004617">
    <property type="entry name" value="ApaH"/>
</dbReference>
<dbReference type="InterPro" id="IPR004843">
    <property type="entry name" value="Calcineurin-like_PHP_ApaH"/>
</dbReference>
<dbReference type="InterPro" id="IPR029052">
    <property type="entry name" value="Metallo-depent_PP-like"/>
</dbReference>
<dbReference type="NCBIfam" id="TIGR00668">
    <property type="entry name" value="apaH"/>
    <property type="match status" value="1"/>
</dbReference>
<dbReference type="NCBIfam" id="NF001204">
    <property type="entry name" value="PRK00166.1"/>
    <property type="match status" value="1"/>
</dbReference>
<dbReference type="PANTHER" id="PTHR40942">
    <property type="match status" value="1"/>
</dbReference>
<dbReference type="PANTHER" id="PTHR40942:SF4">
    <property type="entry name" value="CYTOCHROME C5"/>
    <property type="match status" value="1"/>
</dbReference>
<dbReference type="Pfam" id="PF00149">
    <property type="entry name" value="Metallophos"/>
    <property type="match status" value="1"/>
</dbReference>
<dbReference type="PIRSF" id="PIRSF000903">
    <property type="entry name" value="B5n-ttraPtase_sm"/>
    <property type="match status" value="1"/>
</dbReference>
<dbReference type="SUPFAM" id="SSF56300">
    <property type="entry name" value="Metallo-dependent phosphatases"/>
    <property type="match status" value="1"/>
</dbReference>
<gene>
    <name evidence="1" type="primary">apaH</name>
    <name type="ordered locus">VV1_0665</name>
</gene>
<comment type="function">
    <text evidence="1">Hydrolyzes diadenosine 5',5'''-P1,P4-tetraphosphate to yield ADP.</text>
</comment>
<comment type="catalytic activity">
    <reaction evidence="1">
        <text>P(1),P(4)-bis(5'-adenosyl) tetraphosphate + H2O = 2 ADP + 2 H(+)</text>
        <dbReference type="Rhea" id="RHEA:24252"/>
        <dbReference type="ChEBI" id="CHEBI:15377"/>
        <dbReference type="ChEBI" id="CHEBI:15378"/>
        <dbReference type="ChEBI" id="CHEBI:58141"/>
        <dbReference type="ChEBI" id="CHEBI:456216"/>
        <dbReference type="EC" id="3.6.1.41"/>
    </reaction>
</comment>
<comment type="similarity">
    <text evidence="1">Belongs to the Ap4A hydrolase family.</text>
</comment>
<keyword id="KW-0378">Hydrolase</keyword>
<evidence type="ECO:0000255" key="1">
    <source>
        <dbReference type="HAMAP-Rule" id="MF_00199"/>
    </source>
</evidence>